<gene>
    <name evidence="1" type="primary">ybeY</name>
    <name type="ordered locus">Pden_3693</name>
</gene>
<keyword id="KW-0963">Cytoplasm</keyword>
<keyword id="KW-0255">Endonuclease</keyword>
<keyword id="KW-0378">Hydrolase</keyword>
<keyword id="KW-0479">Metal-binding</keyword>
<keyword id="KW-0540">Nuclease</keyword>
<keyword id="KW-1185">Reference proteome</keyword>
<keyword id="KW-0690">Ribosome biogenesis</keyword>
<keyword id="KW-0698">rRNA processing</keyword>
<keyword id="KW-0862">Zinc</keyword>
<proteinExistence type="inferred from homology"/>
<protein>
    <recommendedName>
        <fullName evidence="1">Endoribonuclease YbeY</fullName>
        <ecNumber evidence="1">3.1.-.-</ecNumber>
    </recommendedName>
</protein>
<organism>
    <name type="scientific">Paracoccus denitrificans (strain Pd 1222)</name>
    <dbReference type="NCBI Taxonomy" id="318586"/>
    <lineage>
        <taxon>Bacteria</taxon>
        <taxon>Pseudomonadati</taxon>
        <taxon>Pseudomonadota</taxon>
        <taxon>Alphaproteobacteria</taxon>
        <taxon>Rhodobacterales</taxon>
        <taxon>Paracoccaceae</taxon>
        <taxon>Paracoccus</taxon>
    </lineage>
</organism>
<sequence>MPDSADAPEEVPEFVDIVLEDDRWEDADLPAMAERAARAVGEWLGLDAFQVVVMGCDDARIAALNAEFRGKPKPTNVLSWPAVEFEAREPGAHPEPPGAEELGDIAISYDTCLREAEAQGKPFADHATHLLVHAMLHLAGYDHIDDEDAETMEDAERSILGKLGIPDPYLEHET</sequence>
<feature type="chain" id="PRO_0000284262" description="Endoribonuclease YbeY">
    <location>
        <begin position="1"/>
        <end position="174"/>
    </location>
</feature>
<feature type="binding site" evidence="1">
    <location>
        <position position="133"/>
    </location>
    <ligand>
        <name>Zn(2+)</name>
        <dbReference type="ChEBI" id="CHEBI:29105"/>
        <note>catalytic</note>
    </ligand>
</feature>
<feature type="binding site" evidence="1">
    <location>
        <position position="137"/>
    </location>
    <ligand>
        <name>Zn(2+)</name>
        <dbReference type="ChEBI" id="CHEBI:29105"/>
        <note>catalytic</note>
    </ligand>
</feature>
<feature type="binding site" evidence="1">
    <location>
        <position position="143"/>
    </location>
    <ligand>
        <name>Zn(2+)</name>
        <dbReference type="ChEBI" id="CHEBI:29105"/>
        <note>catalytic</note>
    </ligand>
</feature>
<name>YBEY_PARDP</name>
<evidence type="ECO:0000255" key="1">
    <source>
        <dbReference type="HAMAP-Rule" id="MF_00009"/>
    </source>
</evidence>
<accession>A1B8B6</accession>
<dbReference type="EC" id="3.1.-.-" evidence="1"/>
<dbReference type="EMBL" id="CP000490">
    <property type="protein sequence ID" value="ABL71760.1"/>
    <property type="molecule type" value="Genomic_DNA"/>
</dbReference>
<dbReference type="RefSeq" id="WP_011749929.1">
    <property type="nucleotide sequence ID" value="NC_008687.1"/>
</dbReference>
<dbReference type="SMR" id="A1B8B6"/>
<dbReference type="STRING" id="318586.Pden_3693"/>
<dbReference type="EnsemblBacteria" id="ABL71760">
    <property type="protein sequence ID" value="ABL71760"/>
    <property type="gene ID" value="Pden_3693"/>
</dbReference>
<dbReference type="GeneID" id="93453351"/>
<dbReference type="KEGG" id="pde:Pden_3693"/>
<dbReference type="eggNOG" id="COG0319">
    <property type="taxonomic scope" value="Bacteria"/>
</dbReference>
<dbReference type="HOGENOM" id="CLU_106710_0_0_5"/>
<dbReference type="OrthoDB" id="9807740at2"/>
<dbReference type="Proteomes" id="UP000000361">
    <property type="component" value="Chromosome 2"/>
</dbReference>
<dbReference type="GO" id="GO:0005737">
    <property type="term" value="C:cytoplasm"/>
    <property type="evidence" value="ECO:0007669"/>
    <property type="project" value="UniProtKB-SubCell"/>
</dbReference>
<dbReference type="GO" id="GO:0004222">
    <property type="term" value="F:metalloendopeptidase activity"/>
    <property type="evidence" value="ECO:0007669"/>
    <property type="project" value="InterPro"/>
</dbReference>
<dbReference type="GO" id="GO:0004521">
    <property type="term" value="F:RNA endonuclease activity"/>
    <property type="evidence" value="ECO:0007669"/>
    <property type="project" value="UniProtKB-UniRule"/>
</dbReference>
<dbReference type="GO" id="GO:0008270">
    <property type="term" value="F:zinc ion binding"/>
    <property type="evidence" value="ECO:0007669"/>
    <property type="project" value="UniProtKB-UniRule"/>
</dbReference>
<dbReference type="GO" id="GO:0006364">
    <property type="term" value="P:rRNA processing"/>
    <property type="evidence" value="ECO:0007669"/>
    <property type="project" value="UniProtKB-UniRule"/>
</dbReference>
<dbReference type="Gene3D" id="3.40.390.30">
    <property type="entry name" value="Metalloproteases ('zincins'), catalytic domain"/>
    <property type="match status" value="1"/>
</dbReference>
<dbReference type="HAMAP" id="MF_00009">
    <property type="entry name" value="Endoribonucl_YbeY"/>
    <property type="match status" value="1"/>
</dbReference>
<dbReference type="InterPro" id="IPR023091">
    <property type="entry name" value="MetalPrtase_cat_dom_sf_prd"/>
</dbReference>
<dbReference type="InterPro" id="IPR002036">
    <property type="entry name" value="YbeY"/>
</dbReference>
<dbReference type="InterPro" id="IPR020549">
    <property type="entry name" value="YbeY_CS"/>
</dbReference>
<dbReference type="NCBIfam" id="TIGR00043">
    <property type="entry name" value="rRNA maturation RNase YbeY"/>
    <property type="match status" value="1"/>
</dbReference>
<dbReference type="PANTHER" id="PTHR46986">
    <property type="entry name" value="ENDORIBONUCLEASE YBEY, CHLOROPLASTIC"/>
    <property type="match status" value="1"/>
</dbReference>
<dbReference type="PANTHER" id="PTHR46986:SF1">
    <property type="entry name" value="ENDORIBONUCLEASE YBEY, CHLOROPLASTIC"/>
    <property type="match status" value="1"/>
</dbReference>
<dbReference type="Pfam" id="PF02130">
    <property type="entry name" value="YbeY"/>
    <property type="match status" value="1"/>
</dbReference>
<dbReference type="SUPFAM" id="SSF55486">
    <property type="entry name" value="Metalloproteases ('zincins'), catalytic domain"/>
    <property type="match status" value="1"/>
</dbReference>
<dbReference type="PROSITE" id="PS01306">
    <property type="entry name" value="UPF0054"/>
    <property type="match status" value="1"/>
</dbReference>
<comment type="function">
    <text evidence="1">Single strand-specific metallo-endoribonuclease involved in late-stage 70S ribosome quality control and in maturation of the 3' terminus of the 16S rRNA.</text>
</comment>
<comment type="cofactor">
    <cofactor evidence="1">
        <name>Zn(2+)</name>
        <dbReference type="ChEBI" id="CHEBI:29105"/>
    </cofactor>
    <text evidence="1">Binds 1 zinc ion.</text>
</comment>
<comment type="subcellular location">
    <subcellularLocation>
        <location evidence="1">Cytoplasm</location>
    </subcellularLocation>
</comment>
<comment type="similarity">
    <text evidence="1">Belongs to the endoribonuclease YbeY family.</text>
</comment>
<reference key="1">
    <citation type="submission" date="2006-12" db="EMBL/GenBank/DDBJ databases">
        <title>Complete sequence of chromosome 2 of Paracoccus denitrificans PD1222.</title>
        <authorList>
            <person name="Copeland A."/>
            <person name="Lucas S."/>
            <person name="Lapidus A."/>
            <person name="Barry K."/>
            <person name="Detter J.C."/>
            <person name="Glavina del Rio T."/>
            <person name="Hammon N."/>
            <person name="Israni S."/>
            <person name="Dalin E."/>
            <person name="Tice H."/>
            <person name="Pitluck S."/>
            <person name="Munk A.C."/>
            <person name="Brettin T."/>
            <person name="Bruce D."/>
            <person name="Han C."/>
            <person name="Tapia R."/>
            <person name="Gilna P."/>
            <person name="Schmutz J."/>
            <person name="Larimer F."/>
            <person name="Land M."/>
            <person name="Hauser L."/>
            <person name="Kyrpides N."/>
            <person name="Lykidis A."/>
            <person name="Spiro S."/>
            <person name="Richardson D.J."/>
            <person name="Moir J.W.B."/>
            <person name="Ferguson S.J."/>
            <person name="van Spanning R.J.M."/>
            <person name="Richardson P."/>
        </authorList>
    </citation>
    <scope>NUCLEOTIDE SEQUENCE [LARGE SCALE GENOMIC DNA]</scope>
    <source>
        <strain>Pd 1222</strain>
    </source>
</reference>